<evidence type="ECO:0000255" key="1">
    <source>
        <dbReference type="HAMAP-Rule" id="MF_00337"/>
    </source>
</evidence>
<name>EX7S_LISMO</name>
<proteinExistence type="inferred from homology"/>
<accession>Q8Y7C3</accession>
<feature type="chain" id="PRO_0000206969" description="Exodeoxyribonuclease 7 small subunit">
    <location>
        <begin position="1"/>
        <end position="75"/>
    </location>
</feature>
<dbReference type="EC" id="3.1.11.6" evidence="1"/>
<dbReference type="EMBL" id="AL591978">
    <property type="protein sequence ID" value="CAC99440.1"/>
    <property type="molecule type" value="Genomic_DNA"/>
</dbReference>
<dbReference type="PIR" id="AB1245">
    <property type="entry name" value="AB1245"/>
</dbReference>
<dbReference type="RefSeq" id="NP_464887.1">
    <property type="nucleotide sequence ID" value="NC_003210.1"/>
</dbReference>
<dbReference type="RefSeq" id="WP_003722489.1">
    <property type="nucleotide sequence ID" value="NZ_CP149495.1"/>
</dbReference>
<dbReference type="SMR" id="Q8Y7C3"/>
<dbReference type="STRING" id="169963.gene:17594019"/>
<dbReference type="PaxDb" id="169963-lmo1362"/>
<dbReference type="EnsemblBacteria" id="CAC99440">
    <property type="protein sequence ID" value="CAC99440"/>
    <property type="gene ID" value="CAC99440"/>
</dbReference>
<dbReference type="GeneID" id="987876"/>
<dbReference type="KEGG" id="lmo:lmo1362"/>
<dbReference type="PATRIC" id="fig|169963.11.peg.1399"/>
<dbReference type="eggNOG" id="COG1722">
    <property type="taxonomic scope" value="Bacteria"/>
</dbReference>
<dbReference type="HOGENOM" id="CLU_145918_3_1_9"/>
<dbReference type="OrthoDB" id="9798666at2"/>
<dbReference type="PhylomeDB" id="Q8Y7C3"/>
<dbReference type="BioCyc" id="LMON169963:LMO1362-MONOMER"/>
<dbReference type="Proteomes" id="UP000000817">
    <property type="component" value="Chromosome"/>
</dbReference>
<dbReference type="GO" id="GO:0005829">
    <property type="term" value="C:cytosol"/>
    <property type="evidence" value="ECO:0000318"/>
    <property type="project" value="GO_Central"/>
</dbReference>
<dbReference type="GO" id="GO:0009318">
    <property type="term" value="C:exodeoxyribonuclease VII complex"/>
    <property type="evidence" value="ECO:0007669"/>
    <property type="project" value="InterPro"/>
</dbReference>
<dbReference type="GO" id="GO:0008855">
    <property type="term" value="F:exodeoxyribonuclease VII activity"/>
    <property type="evidence" value="ECO:0000318"/>
    <property type="project" value="GO_Central"/>
</dbReference>
<dbReference type="GO" id="GO:0006308">
    <property type="term" value="P:DNA catabolic process"/>
    <property type="evidence" value="ECO:0007669"/>
    <property type="project" value="UniProtKB-UniRule"/>
</dbReference>
<dbReference type="FunFam" id="1.10.287.1040:FF:000008">
    <property type="entry name" value="Exodeoxyribonuclease 7 small subunit"/>
    <property type="match status" value="1"/>
</dbReference>
<dbReference type="Gene3D" id="1.10.287.1040">
    <property type="entry name" value="Exonuclease VII, small subunit"/>
    <property type="match status" value="1"/>
</dbReference>
<dbReference type="HAMAP" id="MF_00337">
    <property type="entry name" value="Exonuc_7_S"/>
    <property type="match status" value="1"/>
</dbReference>
<dbReference type="InterPro" id="IPR003761">
    <property type="entry name" value="Exonuc_VII_S"/>
</dbReference>
<dbReference type="InterPro" id="IPR037004">
    <property type="entry name" value="Exonuc_VII_ssu_sf"/>
</dbReference>
<dbReference type="NCBIfam" id="NF002138">
    <property type="entry name" value="PRK00977.1-2"/>
    <property type="match status" value="1"/>
</dbReference>
<dbReference type="NCBIfam" id="NF002139">
    <property type="entry name" value="PRK00977.1-3"/>
    <property type="match status" value="1"/>
</dbReference>
<dbReference type="NCBIfam" id="NF002140">
    <property type="entry name" value="PRK00977.1-4"/>
    <property type="match status" value="1"/>
</dbReference>
<dbReference type="NCBIfam" id="NF010667">
    <property type="entry name" value="PRK14064.1"/>
    <property type="match status" value="1"/>
</dbReference>
<dbReference type="NCBIfam" id="TIGR01280">
    <property type="entry name" value="xseB"/>
    <property type="match status" value="1"/>
</dbReference>
<dbReference type="PANTHER" id="PTHR34137">
    <property type="entry name" value="EXODEOXYRIBONUCLEASE 7 SMALL SUBUNIT"/>
    <property type="match status" value="1"/>
</dbReference>
<dbReference type="PANTHER" id="PTHR34137:SF1">
    <property type="entry name" value="EXODEOXYRIBONUCLEASE 7 SMALL SUBUNIT"/>
    <property type="match status" value="1"/>
</dbReference>
<dbReference type="Pfam" id="PF02609">
    <property type="entry name" value="Exonuc_VII_S"/>
    <property type="match status" value="1"/>
</dbReference>
<dbReference type="PIRSF" id="PIRSF006488">
    <property type="entry name" value="Exonuc_VII_S"/>
    <property type="match status" value="1"/>
</dbReference>
<dbReference type="SUPFAM" id="SSF116842">
    <property type="entry name" value="XseB-like"/>
    <property type="match status" value="1"/>
</dbReference>
<protein>
    <recommendedName>
        <fullName evidence="1">Exodeoxyribonuclease 7 small subunit</fullName>
        <ecNumber evidence="1">3.1.11.6</ecNumber>
    </recommendedName>
    <alternativeName>
        <fullName evidence="1">Exodeoxyribonuclease VII small subunit</fullName>
        <shortName evidence="1">Exonuclease VII small subunit</shortName>
    </alternativeName>
</protein>
<organism>
    <name type="scientific">Listeria monocytogenes serovar 1/2a (strain ATCC BAA-679 / EGD-e)</name>
    <dbReference type="NCBI Taxonomy" id="169963"/>
    <lineage>
        <taxon>Bacteria</taxon>
        <taxon>Bacillati</taxon>
        <taxon>Bacillota</taxon>
        <taxon>Bacilli</taxon>
        <taxon>Bacillales</taxon>
        <taxon>Listeriaceae</taxon>
        <taxon>Listeria</taxon>
    </lineage>
</organism>
<gene>
    <name evidence="1" type="primary">xseB</name>
    <name type="ordered locus">lmo1362</name>
</gene>
<sequence length="75" mass="8267">MATKKKTFEEAIAELETIVEALENGSASLEDSLDMYQKGIELTKLCQDKLQSAEKRMAKVVTDAGEEIPFEADGE</sequence>
<reference key="1">
    <citation type="journal article" date="2001" name="Science">
        <title>Comparative genomics of Listeria species.</title>
        <authorList>
            <person name="Glaser P."/>
            <person name="Frangeul L."/>
            <person name="Buchrieser C."/>
            <person name="Rusniok C."/>
            <person name="Amend A."/>
            <person name="Baquero F."/>
            <person name="Berche P."/>
            <person name="Bloecker H."/>
            <person name="Brandt P."/>
            <person name="Chakraborty T."/>
            <person name="Charbit A."/>
            <person name="Chetouani F."/>
            <person name="Couve E."/>
            <person name="de Daruvar A."/>
            <person name="Dehoux P."/>
            <person name="Domann E."/>
            <person name="Dominguez-Bernal G."/>
            <person name="Duchaud E."/>
            <person name="Durant L."/>
            <person name="Dussurget O."/>
            <person name="Entian K.-D."/>
            <person name="Fsihi H."/>
            <person name="Garcia-del Portillo F."/>
            <person name="Garrido P."/>
            <person name="Gautier L."/>
            <person name="Goebel W."/>
            <person name="Gomez-Lopez N."/>
            <person name="Hain T."/>
            <person name="Hauf J."/>
            <person name="Jackson D."/>
            <person name="Jones L.-M."/>
            <person name="Kaerst U."/>
            <person name="Kreft J."/>
            <person name="Kuhn M."/>
            <person name="Kunst F."/>
            <person name="Kurapkat G."/>
            <person name="Madueno E."/>
            <person name="Maitournam A."/>
            <person name="Mata Vicente J."/>
            <person name="Ng E."/>
            <person name="Nedjari H."/>
            <person name="Nordsiek G."/>
            <person name="Novella S."/>
            <person name="de Pablos B."/>
            <person name="Perez-Diaz J.-C."/>
            <person name="Purcell R."/>
            <person name="Remmel B."/>
            <person name="Rose M."/>
            <person name="Schlueter T."/>
            <person name="Simoes N."/>
            <person name="Tierrez A."/>
            <person name="Vazquez-Boland J.-A."/>
            <person name="Voss H."/>
            <person name="Wehland J."/>
            <person name="Cossart P."/>
        </authorList>
    </citation>
    <scope>NUCLEOTIDE SEQUENCE [LARGE SCALE GENOMIC DNA]</scope>
    <source>
        <strain>ATCC BAA-679 / EGD-e</strain>
    </source>
</reference>
<comment type="function">
    <text evidence="1">Bidirectionally degrades single-stranded DNA into large acid-insoluble oligonucleotides, which are then degraded further into small acid-soluble oligonucleotides.</text>
</comment>
<comment type="catalytic activity">
    <reaction evidence="1">
        <text>Exonucleolytic cleavage in either 5'- to 3'- or 3'- to 5'-direction to yield nucleoside 5'-phosphates.</text>
        <dbReference type="EC" id="3.1.11.6"/>
    </reaction>
</comment>
<comment type="subunit">
    <text evidence="1">Heterooligomer composed of large and small subunits.</text>
</comment>
<comment type="subcellular location">
    <subcellularLocation>
        <location evidence="1">Cytoplasm</location>
    </subcellularLocation>
</comment>
<comment type="similarity">
    <text evidence="1">Belongs to the XseB family.</text>
</comment>
<keyword id="KW-0963">Cytoplasm</keyword>
<keyword id="KW-0269">Exonuclease</keyword>
<keyword id="KW-0378">Hydrolase</keyword>
<keyword id="KW-0540">Nuclease</keyword>
<keyword id="KW-1185">Reference proteome</keyword>